<comment type="function">
    <text evidence="1">May play an important role in fibrillogenesis by controlling lateral growth of collagen II fibrils.</text>
</comment>
<comment type="subunit">
    <text evidence="1">Trimers composed of three different chains: alpha 1(XI), alpha 2(XI), and alpha 3(XI). Alpha 3(XI) is a post-translational modification of alpha 1(II). Alpha 1(V) can also be found instead of alpha 3(XI)=1(II) (By similarity).</text>
</comment>
<comment type="subcellular location">
    <subcellularLocation>
        <location evidence="3">Secreted</location>
        <location evidence="3">Extracellular space</location>
        <location evidence="3">Extracellular matrix</location>
    </subcellularLocation>
</comment>
<comment type="alternative products">
    <event type="alternative splicing"/>
    <isoform>
        <id>Q64739-2</id>
        <name>1</name>
        <name>E56789</name>
        <sequence type="displayed"/>
    </isoform>
    <isoform>
        <id>Q64739-3</id>
        <name>2</name>
        <name>E5689</name>
        <sequence type="described" ref="VSP_007346"/>
    </isoform>
    <isoform>
        <id>Q64739-4</id>
        <name>3</name>
        <name>E5789</name>
        <sequence type="described" ref="VSP_007345"/>
    </isoform>
    <isoform>
        <id>Q64739-5</id>
        <name>4</name>
        <name>E569</name>
        <sequence type="described" ref="VSP_007346 VSP_007347"/>
    </isoform>
    <isoform>
        <id>Q64739-6</id>
        <name>5</name>
        <name>E589</name>
        <sequence type="described" ref="VSP_007345 VSP_007346"/>
    </isoform>
    <isoform>
        <id>Q64739-7</id>
        <name>6</name>
        <name>E59</name>
        <sequence type="described" ref="VSP_007345 VSP_007346 VSP_007347"/>
    </isoform>
    <isoform>
        <id>Q64739-1</id>
        <name>7</name>
        <sequence type="described" ref="VSP_007345 VSP_007347"/>
    </isoform>
    <text>Additional isoforms seem to exist.</text>
</comment>
<comment type="domain">
    <text evidence="1">The C-terminal propeptide, also known as COLFI domain, have crucial roles in tissue growth and repair by controlling both the intracellular assembly of procollagen molecules and the extracellular assembly of collagen fibrils. It binds a calcium ion which is essential for its function (By similarity).</text>
</comment>
<comment type="PTM">
    <text>Prolines at the third position of the tripeptide repeating unit (G-X-Y) are hydroxylated in some or all of the chains.</text>
</comment>
<comment type="similarity">
    <text evidence="3">Belongs to the fibrillar collagen family.</text>
</comment>
<gene>
    <name type="primary">Col11a2</name>
</gene>
<keyword id="KW-0025">Alternative splicing</keyword>
<keyword id="KW-0106">Calcium</keyword>
<keyword id="KW-0176">Collagen</keyword>
<keyword id="KW-1015">Disulfide bond</keyword>
<keyword id="KW-0272">Extracellular matrix</keyword>
<keyword id="KW-0325">Glycoprotein</keyword>
<keyword id="KW-0379">Hydroxylation</keyword>
<keyword id="KW-0479">Metal-binding</keyword>
<keyword id="KW-1185">Reference proteome</keyword>
<keyword id="KW-0677">Repeat</keyword>
<keyword id="KW-0964">Secreted</keyword>
<keyword id="KW-0732">Signal</keyword>
<organism>
    <name type="scientific">Mus musculus</name>
    <name type="common">Mouse</name>
    <dbReference type="NCBI Taxonomy" id="10090"/>
    <lineage>
        <taxon>Eukaryota</taxon>
        <taxon>Metazoa</taxon>
        <taxon>Chordata</taxon>
        <taxon>Craniata</taxon>
        <taxon>Vertebrata</taxon>
        <taxon>Euteleostomi</taxon>
        <taxon>Mammalia</taxon>
        <taxon>Eutheria</taxon>
        <taxon>Euarchontoglires</taxon>
        <taxon>Glires</taxon>
        <taxon>Rodentia</taxon>
        <taxon>Myomorpha</taxon>
        <taxon>Muroidea</taxon>
        <taxon>Muridae</taxon>
        <taxon>Murinae</taxon>
        <taxon>Mus</taxon>
        <taxon>Mus</taxon>
    </lineage>
</organism>
<dbReference type="EMBL" id="AF100956">
    <property type="protein sequence ID" value="AAC69905.1"/>
    <property type="molecule type" value="Genomic_DNA"/>
</dbReference>
<dbReference type="EMBL" id="U16789">
    <property type="protein sequence ID" value="AAA67751.1"/>
    <property type="molecule type" value="mRNA"/>
</dbReference>
<dbReference type="EMBL" id="U16790">
    <property type="protein sequence ID" value="AAA67752.1"/>
    <property type="molecule type" value="Genomic_DNA"/>
</dbReference>
<dbReference type="EMBL" id="D38412">
    <property type="protein sequence ID" value="BAA18910.1"/>
    <property type="molecule type" value="mRNA"/>
</dbReference>
<dbReference type="EMBL" id="D84066">
    <property type="protein sequence ID" value="BAA12208.1"/>
    <property type="molecule type" value="Genomic_DNA"/>
</dbReference>
<dbReference type="CCDS" id="CCDS28640.1">
    <molecule id="Q64739-1"/>
</dbReference>
<dbReference type="CCDS" id="CCDS89075.1">
    <molecule id="Q64739-3"/>
</dbReference>
<dbReference type="PIR" id="A55576">
    <property type="entry name" value="A55576"/>
</dbReference>
<dbReference type="RefSeq" id="NP_001304651.1">
    <molecule id="Q64739-3"/>
    <property type="nucleotide sequence ID" value="NM_001317722.2"/>
</dbReference>
<dbReference type="RefSeq" id="NP_001388230.1">
    <molecule id="Q64739-2"/>
    <property type="nucleotide sequence ID" value="NM_001401301.1"/>
</dbReference>
<dbReference type="RefSeq" id="NP_034056.1">
    <molecule id="Q64739-1"/>
    <property type="nucleotide sequence ID" value="NM_009926.3"/>
</dbReference>
<dbReference type="RefSeq" id="XP_006523627.1">
    <property type="nucleotide sequence ID" value="XM_006523564.3"/>
</dbReference>
<dbReference type="RefSeq" id="XP_006523629.1">
    <property type="nucleotide sequence ID" value="XM_006523566.3"/>
</dbReference>
<dbReference type="RefSeq" id="XP_006523630.1">
    <molecule id="Q64739-6"/>
    <property type="nucleotide sequence ID" value="XM_006523567.5"/>
</dbReference>
<dbReference type="RefSeq" id="XP_006523632.1">
    <molecule id="Q64739-5"/>
    <property type="nucleotide sequence ID" value="XM_006523569.5"/>
</dbReference>
<dbReference type="RefSeq" id="XP_006523633.1">
    <molecule id="Q64739-7"/>
    <property type="nucleotide sequence ID" value="XM_006523570.5"/>
</dbReference>
<dbReference type="BioGRID" id="198806">
    <property type="interactions" value="1"/>
</dbReference>
<dbReference type="ComplexPortal" id="CPX-2975">
    <property type="entry name" value="Collagen type XI trimer variant 1"/>
</dbReference>
<dbReference type="FunCoup" id="Q64739">
    <property type="interactions" value="117"/>
</dbReference>
<dbReference type="STRING" id="10090.ENSMUSP00000084772"/>
<dbReference type="GlyCosmos" id="Q64739">
    <property type="glycosylation" value="1 site, No reported glycans"/>
</dbReference>
<dbReference type="GlyGen" id="Q64739">
    <property type="glycosylation" value="10 sites, 1 O-linked glycan (1 site)"/>
</dbReference>
<dbReference type="iPTMnet" id="Q64739"/>
<dbReference type="PhosphoSitePlus" id="Q64739"/>
<dbReference type="CPTAC" id="non-CPTAC-3904"/>
<dbReference type="jPOST" id="Q64739"/>
<dbReference type="PaxDb" id="10090-ENSMUSP00000084772"/>
<dbReference type="ProteomicsDB" id="283773">
    <molecule id="Q64739-2"/>
</dbReference>
<dbReference type="ProteomicsDB" id="283774">
    <molecule id="Q64739-3"/>
</dbReference>
<dbReference type="ProteomicsDB" id="283775">
    <molecule id="Q64739-4"/>
</dbReference>
<dbReference type="ProteomicsDB" id="283776">
    <molecule id="Q64739-5"/>
</dbReference>
<dbReference type="ProteomicsDB" id="283777">
    <molecule id="Q64739-6"/>
</dbReference>
<dbReference type="ProteomicsDB" id="283778">
    <molecule id="Q64739-7"/>
</dbReference>
<dbReference type="ProteomicsDB" id="283779">
    <molecule id="Q64739-1"/>
</dbReference>
<dbReference type="Antibodypedia" id="28885">
    <property type="antibodies" value="269 antibodies from 24 providers"/>
</dbReference>
<dbReference type="DNASU" id="12815"/>
<dbReference type="Ensembl" id="ENSMUST00000087497.11">
    <molecule id="Q64739-1"/>
    <property type="protein sequence ID" value="ENSMUSP00000084772.5"/>
    <property type="gene ID" value="ENSMUSG00000024330.18"/>
</dbReference>
<dbReference type="Ensembl" id="ENSMUST00000114252.9">
    <molecule id="Q64739-5"/>
    <property type="protein sequence ID" value="ENSMUSP00000109890.2"/>
    <property type="gene ID" value="ENSMUSG00000024330.18"/>
</dbReference>
<dbReference type="Ensembl" id="ENSMUST00000114255.9">
    <molecule id="Q64739-6"/>
    <property type="protein sequence ID" value="ENSMUSP00000109893.2"/>
    <property type="gene ID" value="ENSMUSG00000024330.18"/>
</dbReference>
<dbReference type="Ensembl" id="ENSMUST00000131134.9">
    <molecule id="Q64739-2"/>
    <property type="protein sequence ID" value="ENSMUSP00000122082.3"/>
    <property type="gene ID" value="ENSMUSG00000024330.18"/>
</dbReference>
<dbReference type="Ensembl" id="ENSMUST00000235819.2">
    <molecule id="Q64739-4"/>
    <property type="protein sequence ID" value="ENSMUSP00000157908.2"/>
    <property type="gene ID" value="ENSMUSG00000024330.18"/>
</dbReference>
<dbReference type="Ensembl" id="ENSMUST00000237490.2">
    <molecule id="Q64739-3"/>
    <property type="protein sequence ID" value="ENSMUSP00000157723.2"/>
    <property type="gene ID" value="ENSMUSG00000024330.18"/>
</dbReference>
<dbReference type="Ensembl" id="ENSMUST00000237989.2">
    <molecule id="Q64739-7"/>
    <property type="protein sequence ID" value="ENSMUSP00000157425.2"/>
    <property type="gene ID" value="ENSMUSG00000024330.18"/>
</dbReference>
<dbReference type="GeneID" id="12815"/>
<dbReference type="KEGG" id="mmu:12815"/>
<dbReference type="UCSC" id="uc056zel.1">
    <molecule id="Q64739-3"/>
    <property type="organism name" value="mouse"/>
</dbReference>
<dbReference type="AGR" id="MGI:88447"/>
<dbReference type="CTD" id="1302"/>
<dbReference type="MGI" id="MGI:88447">
    <property type="gene designation" value="Col11a2"/>
</dbReference>
<dbReference type="VEuPathDB" id="HostDB:ENSMUSG00000024330"/>
<dbReference type="eggNOG" id="KOG3544">
    <property type="taxonomic scope" value="Eukaryota"/>
</dbReference>
<dbReference type="GeneTree" id="ENSGT00940000159762"/>
<dbReference type="HOGENOM" id="CLU_001074_2_0_1"/>
<dbReference type="InParanoid" id="Q64739"/>
<dbReference type="OMA" id="TCLYPSV"/>
<dbReference type="OrthoDB" id="8939548at2759"/>
<dbReference type="PhylomeDB" id="Q64739"/>
<dbReference type="TreeFam" id="TF323987"/>
<dbReference type="Reactome" id="R-MMU-1442490">
    <property type="pathway name" value="Collagen degradation"/>
</dbReference>
<dbReference type="Reactome" id="R-MMU-1650814">
    <property type="pathway name" value="Collagen biosynthesis and modifying enzymes"/>
</dbReference>
<dbReference type="Reactome" id="R-MMU-2022090">
    <property type="pathway name" value="Assembly of collagen fibrils and other multimeric structures"/>
</dbReference>
<dbReference type="Reactome" id="R-MMU-3000171">
    <property type="pathway name" value="Non-integrin membrane-ECM interactions"/>
</dbReference>
<dbReference type="Reactome" id="R-MMU-8874081">
    <property type="pathway name" value="MET activates PTK2 signaling"/>
</dbReference>
<dbReference type="Reactome" id="R-MMU-8948216">
    <property type="pathway name" value="Collagen chain trimerization"/>
</dbReference>
<dbReference type="BioGRID-ORCS" id="12815">
    <property type="hits" value="7 hits in 79 CRISPR screens"/>
</dbReference>
<dbReference type="ChiTaRS" id="Col11a2">
    <property type="organism name" value="mouse"/>
</dbReference>
<dbReference type="PRO" id="PR:Q64739"/>
<dbReference type="Proteomes" id="UP000000589">
    <property type="component" value="Chromosome 17"/>
</dbReference>
<dbReference type="RNAct" id="Q64739">
    <property type="molecule type" value="protein"/>
</dbReference>
<dbReference type="Bgee" id="ENSMUSG00000024330">
    <property type="expression patterns" value="Expressed in humerus cartilage element and 95 other cell types or tissues"/>
</dbReference>
<dbReference type="ExpressionAtlas" id="Q64739">
    <property type="expression patterns" value="baseline and differential"/>
</dbReference>
<dbReference type="GO" id="GO:0005581">
    <property type="term" value="C:collagen trimer"/>
    <property type="evidence" value="ECO:0000314"/>
    <property type="project" value="MGI"/>
</dbReference>
<dbReference type="GO" id="GO:0005592">
    <property type="term" value="C:collagen type XI trimer"/>
    <property type="evidence" value="ECO:0000303"/>
    <property type="project" value="ComplexPortal"/>
</dbReference>
<dbReference type="GO" id="GO:0062023">
    <property type="term" value="C:collagen-containing extracellular matrix"/>
    <property type="evidence" value="ECO:0007005"/>
    <property type="project" value="BHF-UCL"/>
</dbReference>
<dbReference type="GO" id="GO:0005576">
    <property type="term" value="C:extracellular region"/>
    <property type="evidence" value="ECO:0007669"/>
    <property type="project" value="UniProtKB-KW"/>
</dbReference>
<dbReference type="GO" id="GO:0005201">
    <property type="term" value="F:extracellular matrix structural constituent"/>
    <property type="evidence" value="ECO:0000305"/>
    <property type="project" value="MGI"/>
</dbReference>
<dbReference type="GO" id="GO:0046872">
    <property type="term" value="F:metal ion binding"/>
    <property type="evidence" value="ECO:0007669"/>
    <property type="project" value="UniProtKB-KW"/>
</dbReference>
<dbReference type="GO" id="GO:0002062">
    <property type="term" value="P:chondrocyte differentiation"/>
    <property type="evidence" value="ECO:0000315"/>
    <property type="project" value="MGI"/>
</dbReference>
<dbReference type="GO" id="GO:0030199">
    <property type="term" value="P:collagen fibril organization"/>
    <property type="evidence" value="ECO:0000315"/>
    <property type="project" value="MGI"/>
</dbReference>
<dbReference type="GO" id="GO:0007605">
    <property type="term" value="P:sensory perception of sound"/>
    <property type="evidence" value="ECO:0000315"/>
    <property type="project" value="MGI"/>
</dbReference>
<dbReference type="GO" id="GO:0048705">
    <property type="term" value="P:skeletal system morphogenesis"/>
    <property type="evidence" value="ECO:0000315"/>
    <property type="project" value="MGI"/>
</dbReference>
<dbReference type="GO" id="GO:0001894">
    <property type="term" value="P:tissue homeostasis"/>
    <property type="evidence" value="ECO:0000315"/>
    <property type="project" value="MGI"/>
</dbReference>
<dbReference type="CDD" id="cd00110">
    <property type="entry name" value="LamG"/>
    <property type="match status" value="1"/>
</dbReference>
<dbReference type="FunFam" id="2.60.120.1000:FF:000004">
    <property type="entry name" value="collagen alpha-2(XI) chain isoform X1"/>
    <property type="match status" value="1"/>
</dbReference>
<dbReference type="Gene3D" id="2.60.120.1000">
    <property type="match status" value="1"/>
</dbReference>
<dbReference type="Gene3D" id="2.60.120.200">
    <property type="match status" value="1"/>
</dbReference>
<dbReference type="InterPro" id="IPR008160">
    <property type="entry name" value="Collagen"/>
</dbReference>
<dbReference type="InterPro" id="IPR050149">
    <property type="entry name" value="Collagen_superfamily"/>
</dbReference>
<dbReference type="InterPro" id="IPR013320">
    <property type="entry name" value="ConA-like_dom_sf"/>
</dbReference>
<dbReference type="InterPro" id="IPR000885">
    <property type="entry name" value="Fib_collagen_C"/>
</dbReference>
<dbReference type="InterPro" id="IPR001791">
    <property type="entry name" value="Laminin_G"/>
</dbReference>
<dbReference type="InterPro" id="IPR048287">
    <property type="entry name" value="TSPN-like_N"/>
</dbReference>
<dbReference type="PANTHER" id="PTHR24023">
    <property type="entry name" value="COLLAGEN ALPHA"/>
    <property type="match status" value="1"/>
</dbReference>
<dbReference type="PANTHER" id="PTHR24023:SF1082">
    <property type="entry name" value="COLLAGEN TRIPLE HELIX REPEAT"/>
    <property type="match status" value="1"/>
</dbReference>
<dbReference type="Pfam" id="PF01410">
    <property type="entry name" value="COLFI"/>
    <property type="match status" value="2"/>
</dbReference>
<dbReference type="Pfam" id="PF01391">
    <property type="entry name" value="Collagen"/>
    <property type="match status" value="5"/>
</dbReference>
<dbReference type="Pfam" id="PF02210">
    <property type="entry name" value="Laminin_G_2"/>
    <property type="match status" value="1"/>
</dbReference>
<dbReference type="SMART" id="SM00038">
    <property type="entry name" value="COLFI"/>
    <property type="match status" value="1"/>
</dbReference>
<dbReference type="SMART" id="SM00282">
    <property type="entry name" value="LamG"/>
    <property type="match status" value="1"/>
</dbReference>
<dbReference type="SMART" id="SM00210">
    <property type="entry name" value="TSPN"/>
    <property type="match status" value="1"/>
</dbReference>
<dbReference type="SUPFAM" id="SSF49899">
    <property type="entry name" value="Concanavalin A-like lectins/glucanases"/>
    <property type="match status" value="1"/>
</dbReference>
<dbReference type="PROSITE" id="PS51461">
    <property type="entry name" value="NC1_FIB"/>
    <property type="match status" value="1"/>
</dbReference>
<protein>
    <recommendedName>
        <fullName>Collagen alpha-2(XI) chain</fullName>
    </recommendedName>
</protein>
<feature type="signal peptide" evidence="2">
    <location>
        <begin position="1"/>
        <end position="27"/>
    </location>
</feature>
<feature type="chain" id="PRO_0000005842" description="Collagen alpha-2(XI) chain">
    <location>
        <begin position="28"/>
        <end position="1736"/>
    </location>
</feature>
<feature type="propeptide" id="PRO_0000005843" description="C-terminal propeptide">
    <location>
        <begin position="1501"/>
        <end position="1736"/>
    </location>
</feature>
<feature type="domain" description="Laminin G-like">
    <location>
        <begin position="57"/>
        <end position="228"/>
    </location>
</feature>
<feature type="domain" description="Collagen-like 1">
    <location>
        <begin position="399"/>
        <end position="447"/>
    </location>
</feature>
<feature type="domain" description="Collagen-like 2">
    <location>
        <begin position="487"/>
        <end position="545"/>
    </location>
</feature>
<feature type="domain" description="Collagen-like 3">
    <location>
        <begin position="546"/>
        <end position="583"/>
    </location>
</feature>
<feature type="domain" description="Collagen-like 4">
    <location>
        <begin position="682"/>
        <end position="737"/>
    </location>
</feature>
<feature type="domain" description="Collagen-like 5">
    <location>
        <begin position="868"/>
        <end position="924"/>
    </location>
</feature>
<feature type="domain" description="Collagen-like 6">
    <location>
        <begin position="967"/>
        <end position="1025"/>
    </location>
</feature>
<feature type="domain" description="Collagen-like 7">
    <location>
        <begin position="1026"/>
        <end position="1055"/>
    </location>
</feature>
<feature type="domain" description="Collagen-like 8">
    <location>
        <begin position="1056"/>
        <end position="1086"/>
    </location>
</feature>
<feature type="domain" description="Collagen-like 9">
    <location>
        <begin position="1114"/>
        <end position="1172"/>
    </location>
</feature>
<feature type="domain" description="Collagen-like 10">
    <location>
        <begin position="1393"/>
        <end position="1447"/>
    </location>
</feature>
<feature type="domain" description="Collagen-like 11">
    <location>
        <begin position="1448"/>
        <end position="1499"/>
    </location>
</feature>
<feature type="domain" description="Fibrillar collagen NC1" evidence="3">
    <location>
        <begin position="1541"/>
        <end position="1735"/>
    </location>
</feature>
<feature type="region of interest" description="Nonhelical region">
    <location>
        <begin position="215"/>
        <end position="486"/>
    </location>
</feature>
<feature type="region of interest" description="Disordered" evidence="4">
    <location>
        <begin position="228"/>
        <end position="270"/>
    </location>
</feature>
<feature type="region of interest" description="Disordered" evidence="4">
    <location>
        <begin position="364"/>
        <end position="465"/>
    </location>
</feature>
<feature type="region of interest" description="Disordered" evidence="4">
    <location>
        <begin position="485"/>
        <end position="1538"/>
    </location>
</feature>
<feature type="region of interest" description="Triple-helical region">
    <location>
        <begin position="487"/>
        <end position="1500"/>
    </location>
</feature>
<feature type="compositionally biased region" description="Polar residues" evidence="4">
    <location>
        <begin position="258"/>
        <end position="269"/>
    </location>
</feature>
<feature type="compositionally biased region" description="Low complexity" evidence="4">
    <location>
        <begin position="497"/>
        <end position="533"/>
    </location>
</feature>
<feature type="compositionally biased region" description="Pro residues" evidence="4">
    <location>
        <begin position="615"/>
        <end position="624"/>
    </location>
</feature>
<feature type="compositionally biased region" description="Low complexity" evidence="4">
    <location>
        <begin position="650"/>
        <end position="668"/>
    </location>
</feature>
<feature type="compositionally biased region" description="Basic and acidic residues" evidence="4">
    <location>
        <begin position="765"/>
        <end position="774"/>
    </location>
</feature>
<feature type="compositionally biased region" description="Low complexity" evidence="4">
    <location>
        <begin position="776"/>
        <end position="789"/>
    </location>
</feature>
<feature type="compositionally biased region" description="Low complexity" evidence="4">
    <location>
        <begin position="842"/>
        <end position="861"/>
    </location>
</feature>
<feature type="compositionally biased region" description="Gly residues" evidence="4">
    <location>
        <begin position="994"/>
        <end position="1003"/>
    </location>
</feature>
<feature type="compositionally biased region" description="Pro residues" evidence="4">
    <location>
        <begin position="1029"/>
        <end position="1040"/>
    </location>
</feature>
<feature type="compositionally biased region" description="Low complexity" evidence="4">
    <location>
        <begin position="1115"/>
        <end position="1133"/>
    </location>
</feature>
<feature type="compositionally biased region" description="Low complexity" evidence="4">
    <location>
        <begin position="1155"/>
        <end position="1164"/>
    </location>
</feature>
<feature type="compositionally biased region" description="Pro residues" evidence="4">
    <location>
        <begin position="1176"/>
        <end position="1187"/>
    </location>
</feature>
<feature type="compositionally biased region" description="Low complexity" evidence="4">
    <location>
        <begin position="1188"/>
        <end position="1197"/>
    </location>
</feature>
<feature type="compositionally biased region" description="Gly residues" evidence="4">
    <location>
        <begin position="1198"/>
        <end position="1207"/>
    </location>
</feature>
<feature type="compositionally biased region" description="Low complexity" evidence="4">
    <location>
        <begin position="1217"/>
        <end position="1230"/>
    </location>
</feature>
<feature type="compositionally biased region" description="Basic and acidic residues" evidence="4">
    <location>
        <begin position="1232"/>
        <end position="1241"/>
    </location>
</feature>
<feature type="compositionally biased region" description="Low complexity" evidence="4">
    <location>
        <begin position="1256"/>
        <end position="1272"/>
    </location>
</feature>
<feature type="compositionally biased region" description="Basic and acidic residues" evidence="4">
    <location>
        <begin position="1287"/>
        <end position="1296"/>
    </location>
</feature>
<feature type="compositionally biased region" description="Low complexity" evidence="4">
    <location>
        <begin position="1376"/>
        <end position="1386"/>
    </location>
</feature>
<feature type="compositionally biased region" description="Pro residues" evidence="4">
    <location>
        <begin position="1388"/>
        <end position="1397"/>
    </location>
</feature>
<feature type="compositionally biased region" description="Pro residues" evidence="4">
    <location>
        <begin position="1457"/>
        <end position="1467"/>
    </location>
</feature>
<feature type="compositionally biased region" description="Low complexity" evidence="4">
    <location>
        <begin position="1469"/>
        <end position="1481"/>
    </location>
</feature>
<feature type="binding site" evidence="1">
    <location>
        <position position="1589"/>
    </location>
    <ligand>
        <name>Ca(2+)</name>
        <dbReference type="ChEBI" id="CHEBI:29108"/>
    </ligand>
</feature>
<feature type="binding site" evidence="1">
    <location>
        <position position="1591"/>
    </location>
    <ligand>
        <name>Ca(2+)</name>
        <dbReference type="ChEBI" id="CHEBI:29108"/>
    </ligand>
</feature>
<feature type="binding site" evidence="1">
    <location>
        <position position="1592"/>
    </location>
    <ligand>
        <name>Ca(2+)</name>
        <dbReference type="ChEBI" id="CHEBI:29108"/>
    </ligand>
</feature>
<feature type="binding site" evidence="1">
    <location>
        <position position="1594"/>
    </location>
    <ligand>
        <name>Ca(2+)</name>
        <dbReference type="ChEBI" id="CHEBI:29108"/>
    </ligand>
</feature>
<feature type="binding site" evidence="1">
    <location>
        <position position="1597"/>
    </location>
    <ligand>
        <name>Ca(2+)</name>
        <dbReference type="ChEBI" id="CHEBI:29108"/>
    </ligand>
</feature>
<feature type="glycosylation site" description="N-linked (GlcNAc...) asparagine" evidence="2">
    <location>
        <position position="1604"/>
    </location>
</feature>
<feature type="disulfide bond" evidence="3">
    <location>
        <begin position="1571"/>
        <end position="1603"/>
    </location>
</feature>
<feature type="disulfide bond" description="Interchain" evidence="3">
    <location>
        <position position="1577"/>
    </location>
</feature>
<feature type="disulfide bond" description="Interchain" evidence="3">
    <location>
        <position position="1594"/>
    </location>
</feature>
<feature type="disulfide bond" evidence="3">
    <location>
        <begin position="1612"/>
        <end position="1733"/>
    </location>
</feature>
<feature type="disulfide bond" evidence="3">
    <location>
        <begin position="1655"/>
        <end position="1689"/>
    </location>
</feature>
<feature type="splice variant" id="VSP_007345" description="In isoform 3, isoform 5, isoform 6 and isoform 7." evidence="5 6">
    <location>
        <begin position="267"/>
        <end position="292"/>
    </location>
</feature>
<feature type="splice variant" id="VSP_007346" description="In isoform 2, isoform 4, isoform 5 and isoform 6." evidence="5">
    <location>
        <begin position="293"/>
        <end position="313"/>
    </location>
</feature>
<feature type="splice variant" id="VSP_007347" description="In isoform 4, isoform 6 and isoform 7." evidence="5 6">
    <location>
        <begin position="314"/>
        <end position="373"/>
    </location>
</feature>
<feature type="sequence conflict" description="In Ref. 2; AAA67751." evidence="7" ref="2">
    <original>R</original>
    <variation>L</variation>
    <location>
        <position position="536"/>
    </location>
</feature>
<feature type="sequence conflict" description="In Ref. 3; BAA18910." evidence="7" ref="3">
    <original>P</original>
    <variation>S</variation>
    <location>
        <position position="621"/>
    </location>
</feature>
<feature type="sequence conflict" description="In Ref. 2; AAA67751." evidence="7" ref="2">
    <original>NQ</original>
    <variation>KP</variation>
    <location>
        <begin position="704"/>
        <end position="705"/>
    </location>
</feature>
<feature type="sequence conflict" description="In Ref. 2; AAA67751." evidence="7" ref="2">
    <original>V</original>
    <variation>A</variation>
    <location>
        <position position="797"/>
    </location>
</feature>
<feature type="sequence conflict" description="In Ref. 2; AAA67751." evidence="7" ref="2">
    <original>TGP</original>
    <variation>HGS</variation>
    <location>
        <begin position="843"/>
        <end position="845"/>
    </location>
</feature>
<feature type="sequence conflict" description="In Ref. 2; AAA67751." evidence="7" ref="2">
    <original>A</original>
    <variation>S</variation>
    <location>
        <position position="854"/>
    </location>
</feature>
<feature type="sequence conflict" description="In Ref. 2; AAA67751." evidence="7" ref="2">
    <original>R</original>
    <variation>G</variation>
    <location>
        <position position="876"/>
    </location>
</feature>
<feature type="sequence conflict" description="In Ref. 2; AAA67751." evidence="7" ref="2">
    <original>G</original>
    <variation>V</variation>
    <location>
        <position position="889"/>
    </location>
</feature>
<feature type="sequence conflict" description="In Ref. 2; AAA67751." evidence="7" ref="2">
    <original>G</original>
    <variation>D</variation>
    <location>
        <position position="922"/>
    </location>
</feature>
<feature type="sequence conflict" description="In Ref. 2; AAA67751." evidence="7" ref="2">
    <original>E</original>
    <variation>V</variation>
    <location>
        <position position="1005"/>
    </location>
</feature>
<feature type="sequence conflict" description="In Ref. 2; AAA67751." evidence="7" ref="2">
    <original>P</original>
    <variation>S</variation>
    <location>
        <position position="1253"/>
    </location>
</feature>
<feature type="sequence conflict" description="In Ref. 2; AAA67751." evidence="7" ref="2">
    <original>A</original>
    <variation>T</variation>
    <location>
        <position position="1386"/>
    </location>
</feature>
<feature type="sequence conflict" description="In Ref. 2; AAA67751." evidence="7" ref="2">
    <original>I</original>
    <variation>M</variation>
    <location>
        <position position="1522"/>
    </location>
</feature>
<reference key="1">
    <citation type="submission" date="1998-10" db="EMBL/GenBank/DDBJ databases">
        <title>Sequence of the mouse major histocomaptibility locus class II region.</title>
        <authorList>
            <person name="Rowen L."/>
            <person name="Qin S."/>
            <person name="Madan A."/>
            <person name="Loretz C."/>
            <person name="James R."/>
            <person name="Dors M."/>
            <person name="Mix L."/>
            <person name="Hall J."/>
            <person name="Lasky S."/>
            <person name="Hood L."/>
        </authorList>
    </citation>
    <scope>NUCLEOTIDE SEQUENCE [LARGE SCALE GENOMIC DNA]</scope>
    <source>
        <strain>129/SvJ</strain>
    </source>
</reference>
<reference key="2">
    <citation type="journal article" date="1996" name="Matrix Biol.">
        <title>The mouse col11a2 gene. Some transcripts from the adjacent rxr-beta gene extend into the col11a2 gene.</title>
        <authorList>
            <person name="Vandenberg P."/>
            <person name="Vuoristo M.M."/>
            <person name="Ala-Kokko L."/>
            <person name="Prockop D.J."/>
        </authorList>
    </citation>
    <scope>NUCLEOTIDE SEQUENCE [GENOMIC DNA / MRNA] OF 1-1678 (ISOFORM 7)</scope>
    <source>
        <strain>129/Sv</strain>
        <strain>FVB/N</strain>
        <tissue>Cartilage</tissue>
    </source>
</reference>
<reference key="3">
    <citation type="journal article" date="1995" name="J. Biol. Chem.">
        <title>Differential expression of an acidic domain in the amino-terminal propeptide of mouse pro-alpha2(XI) collagen by complex alternative splicing.</title>
        <authorList>
            <person name="Tsumaki N."/>
            <person name="Kimura T."/>
        </authorList>
    </citation>
    <scope>NUCLEOTIDE SEQUENCE [MRNA] OF 1-624 (ISOFORM 1)</scope>
    <scope>ALTERNATIVE SPLICING (ISOFORMS 2; 3; 4; 5 AND 6)</scope>
    <source>
        <strain>129/Sv</strain>
    </source>
</reference>
<reference key="4">
    <citation type="journal article" date="1996" name="J. Cell Biol.">
        <title>Separable cis-regulatory elements that contribute to tissue- and site-specific alpha 2(XI) collagen gene expression in the embryonic mouse cartilage.</title>
        <authorList>
            <person name="Tsumaki N."/>
            <person name="Kimura T."/>
            <person name="Matsui Y."/>
            <person name="Ochi T."/>
        </authorList>
    </citation>
    <scope>NUCLEOTIDE SEQUENCE [GENOMIC DNA] OF 1-8</scope>
    <source>
        <strain>129/Sv</strain>
        <tissue>Liver</tissue>
    </source>
</reference>
<proteinExistence type="evidence at transcript level"/>
<evidence type="ECO:0000250" key="1"/>
<evidence type="ECO:0000255" key="2"/>
<evidence type="ECO:0000255" key="3">
    <source>
        <dbReference type="PROSITE-ProRule" id="PRU00793"/>
    </source>
</evidence>
<evidence type="ECO:0000256" key="4">
    <source>
        <dbReference type="SAM" id="MobiDB-lite"/>
    </source>
</evidence>
<evidence type="ECO:0000303" key="5">
    <source>
    </source>
</evidence>
<evidence type="ECO:0000303" key="6">
    <source>
    </source>
</evidence>
<evidence type="ECO:0000305" key="7"/>
<name>COBA2_MOUSE</name>
<accession>Q64739</accession>
<accession>Q61432</accession>
<accession>Q9Z1W0</accession>
<sequence>MERCSRCHRLLLFLPLVLGLSAAPGWAGAPSVDVLRALRFPSLPDGVRRSKGVCPGDVAYRVARPAQLSAPTRQLFPGGFPKDFSLLTVVRTRPGLQAPLLTLYSAQGVQQLGLELGRPVRFLYEDQRGRPQASAQPIFRGLSLADGKWHHVAVAVKGQSVTLIVDCKKRVTRPLPRSVHPVLDTHGVVIFGAHILDDEVFEGDVQELLVVPGVQAAYQSCGQKDLECEREQRDGPQTQKPHRAQRSPKKEPARLHKPQSQEPQKQPTESLYYDYEPPYYDVMTTGTAPDYQYPTPGEEEGVLESSPLPFLEEEQTDLQVSPTADSFQAEEYGEGGTDSPAGFYDYTYGYGDDYREETELGPALSAETAHSGAVAHGPRGLKGEKGEPAVLEPGMFVEGPPGPEGPAGLAGPPGIQGNPGPVGDPGERGPPGRAGLPGSDGPPGPPGTSLMLPFRFGSSGGDKGPVVAAQEAQAQAILQQARLALRGPPGPMGYTGRPGPLGQPGSPGLKGESGDLGPQGPRGPQGLTGPPGKAGRRGRAGADGARGMPGEPGMKGDRGFDGLPGLPGEKGQRGDTGAQGLPGPPGEDGERGDDGEIGPRGLPGESGPRGLLGPKGPPGIPGPPGVRGMDGPHGPKGSLGPQGEPGPPGQQGTPGAQGLPGPQGAIGPHGEKGARGKPGLPGMPGSDGLPGHPGKEGPPGTKGNQGPSGPQGPLGYPGPRGVKGVDGIRGLKGHKGEKGEDGFPGFKGDIGVKGDRGEVGVPGSRGEDGPEGPKGRTGPTGDPGPTGLMGEKGKLGVPGLPGYPGRQGPKGSLGFPGFPGASGEKGARGLSGKSGPRGERGPTGPRGQRGPRGATGKSGAKGTSGGDGPHGPPGERGLPGPQGPNGFPGPKGPPGPAGKDGLPGHPGQRGEVGFQGKTGPPGPPGVVGPQGTAGESGPMGERGHSGPPGPPGEQGLPGTSGKEGTKGDPGPPGAPGKDGPAGLRGFPGERGLPGTAGGPGLKGNEGPAGPPGPAGSPGERGAAGSGGPIGPPGRPGPQGPPGAAGEKGVPGEKGPIGPTGRDGVQGPVGLPGPAGPPGVAGEDGDKGEVGDPGQKGTKGNKGEHGPPGPPGPIGPVGQPGAAGADGEPGARGPQGHFGAKGDEGTRGFNGPPGPIGLQGLPGPSGEKGETGDGGPMGPPGPPGPRGPAGPNGADGPQGSPGGVGNLGPPGEKGEPGESGSPGVQGEPGVKGPRGERGEKGESGQAGEAGPPGPKGPTGDNGPKGNPGPVGFPGDPGPPGEAGPRGQDGAKGDRGEDGEPGQPGSPGPTGENGPPGPLGKRGPAGTPGPEGRQGEKGAKGDPGAVGAPGKTGPVGPAGLAGKPGPDGLRGLPGSVGQQGRPGATGQAGPPGPVGPPGLPGLRGDAGAKGEKGHPGLIGLIGPTGEQGEKGDRGLPGPQGSPGQKGETGIPGASGPIGPGGPPGLPGPSGPKGAKGATGPAGPKGEKGVQGPPGHPGPPGEVIQPLPIQMPKKTRRSVDGSKLIQDEEAVPTGGAPGSPAGLEEIFGSLDSLREEIEQMRRPAGTQDSPARTCQDLKLCHPELPDGEYWVDPNQGCARDAFRVFCNFTAGGETCVTPRDDVTQFSYVDSEGSPVGVVQLTFLRLLSVSAHQDVSYPCSGVSQDGPLKLRGANEDELSPETSPYVKEFRDGCQTQQGRTVLEVRTPVLEQLPVLDASFADLGAPTRRGGVLLGPVCFMG</sequence>